<organism>
    <name type="scientific">Homo sapiens</name>
    <name type="common">Human</name>
    <dbReference type="NCBI Taxonomy" id="9606"/>
    <lineage>
        <taxon>Eukaryota</taxon>
        <taxon>Metazoa</taxon>
        <taxon>Chordata</taxon>
        <taxon>Craniata</taxon>
        <taxon>Vertebrata</taxon>
        <taxon>Euteleostomi</taxon>
        <taxon>Mammalia</taxon>
        <taxon>Eutheria</taxon>
        <taxon>Euarchontoglires</taxon>
        <taxon>Primates</taxon>
        <taxon>Haplorrhini</taxon>
        <taxon>Catarrhini</taxon>
        <taxon>Hominidae</taxon>
        <taxon>Homo</taxon>
    </lineage>
</organism>
<gene>
    <name type="primary">CD200R1</name>
    <name type="synonym">CD200R</name>
    <name type="synonym">CRTR2</name>
    <name type="synonym">MOX2R</name>
    <name type="synonym">OX2R</name>
    <name type="ORF">UNQ2522/PRO6015</name>
</gene>
<protein>
    <recommendedName>
        <fullName>Cell surface glycoprotein CD200 receptor 1</fullName>
    </recommendedName>
    <alternativeName>
        <fullName>CD200 cell surface glycoprotein receptor</fullName>
    </alternativeName>
    <alternativeName>
        <fullName>Cell surface glycoprotein OX2 receptor 1</fullName>
    </alternativeName>
</protein>
<comment type="function">
    <text evidence="4">Inhibitory receptor for the CD200/OX2 cell surface glycoprotein. Limits inflammation by inhibiting the expression of pro-inflammatory molecules including TNF-alpha, interferons, and inducible nitric oxide synthase (iNOS) in response to selected stimuli. Also binds to HHV-8 K14 viral CD200 homolog with identical affinity and kinetics as the host CD200.</text>
</comment>
<comment type="subunit">
    <text evidence="1">CD200 and CD200R1 interact via their respective N-terminal Ig-like domains (By similarity). Interacts with Human herpesvirus 8 vOX2 protein.</text>
</comment>
<comment type="subunit">
    <text evidence="7">(Microbial infection) Interacts with human herpesvirus 8/HHV-8 protein vOX2/K14.</text>
</comment>
<comment type="interaction">
    <interactant intactId="EBI-4314412">
        <id>Q8TD46</id>
    </interactant>
    <interactant intactId="EBI-3910563">
        <id>P41217</id>
        <label>CD200</label>
    </interactant>
    <organismsDiffer>false</organismsDiffer>
    <experiments>2</experiments>
</comment>
<comment type="interaction">
    <interactant intactId="EBI-12824513">
        <id>Q8TD46-4</id>
    </interactant>
    <interactant intactId="EBI-10827839">
        <id>Q15848</id>
        <label>ADIPOQ</label>
    </interactant>
    <organismsDiffer>false</organismsDiffer>
    <experiments>3</experiments>
</comment>
<comment type="interaction">
    <interactant intactId="EBI-12824513">
        <id>Q8TD46-4</id>
    </interactant>
    <interactant intactId="EBI-12256978">
        <id>Q8N6F1-2</id>
        <label>CLDN19</label>
    </interactant>
    <organismsDiffer>false</organismsDiffer>
    <experiments>3</experiments>
</comment>
<comment type="interaction">
    <interactant intactId="EBI-12824513">
        <id>Q8TD46-4</id>
    </interactant>
    <interactant intactId="EBI-10976398">
        <id>Q7Z2K6</id>
        <label>ERMP1</label>
    </interactant>
    <organismsDiffer>false</organismsDiffer>
    <experiments>3</experiments>
</comment>
<comment type="interaction">
    <interactant intactId="EBI-12824513">
        <id>Q8TD46-4</id>
    </interactant>
    <interactant intactId="EBI-3925203">
        <id>Q8N3T1</id>
        <label>GALNT15</label>
    </interactant>
    <organismsDiffer>false</organismsDiffer>
    <experiments>3</experiments>
</comment>
<comment type="interaction">
    <interactant intactId="EBI-12824513">
        <id>Q8TD46-4</id>
    </interactant>
    <interactant intactId="EBI-2802124">
        <id>Q92982</id>
        <label>NINJ1</label>
    </interactant>
    <organismsDiffer>false</organismsDiffer>
    <experiments>3</experiments>
</comment>
<comment type="interaction">
    <interactant intactId="EBI-12824513">
        <id>Q8TD46-4</id>
    </interactant>
    <interactant intactId="EBI-14199621">
        <id>Q13635-3</id>
        <label>PTCH1</label>
    </interactant>
    <organismsDiffer>false</organismsDiffer>
    <experiments>3</experiments>
</comment>
<comment type="interaction">
    <interactant intactId="EBI-12824513">
        <id>Q8TD46-4</id>
    </interactant>
    <interactant intactId="EBI-10197617">
        <id>P11686</id>
        <label>SFTPC</label>
    </interactant>
    <organismsDiffer>false</organismsDiffer>
    <experiments>3</experiments>
</comment>
<comment type="interaction">
    <interactant intactId="EBI-12824513">
        <id>Q8TD46-4</id>
    </interactant>
    <interactant intactId="EBI-744081">
        <id>Q96EQ0</id>
        <label>SGTB</label>
    </interactant>
    <organismsDiffer>false</organismsDiffer>
    <experiments>3</experiments>
</comment>
<comment type="subcellular location">
    <molecule>Isoform 1</molecule>
    <subcellularLocation>
        <location>Cell membrane</location>
        <topology>Single-pass type I membrane protein</topology>
    </subcellularLocation>
</comment>
<comment type="subcellular location">
    <molecule>Isoform 4</molecule>
    <subcellularLocation>
        <location>Cell membrane</location>
        <topology>Single-pass type I membrane protein</topology>
    </subcellularLocation>
</comment>
<comment type="subcellular location">
    <molecule>Isoform 2</molecule>
    <subcellularLocation>
        <location>Secreted</location>
    </subcellularLocation>
</comment>
<comment type="subcellular location">
    <molecule>Isoform 3</molecule>
    <subcellularLocation>
        <location>Secreted</location>
    </subcellularLocation>
</comment>
<comment type="alternative products">
    <event type="alternative splicing"/>
    <isoform>
        <id>Q8TD46-4</id>
        <name>4</name>
        <sequence type="displayed"/>
    </isoform>
    <isoform>
        <id>Q8TD46-1</id>
        <name>1</name>
        <sequence type="described" ref="VSP_061888"/>
    </isoform>
    <isoform>
        <id>Q8TD46-2</id>
        <name>2</name>
        <sequence type="described" ref="VSP_061889 VSP_061890"/>
    </isoform>
    <isoform>
        <id>Q8TD46-3</id>
        <name>3</name>
        <sequence type="described" ref="VSP_061888 VSP_061889 VSP_061890"/>
    </isoform>
</comment>
<comment type="tissue specificity">
    <text evidence="4">Expressed in granulocytes, monocytes, most T-cells, neutrophils, basophils and a subset of NK, NKT and B-cells (at protein level). Expressed in bone marrow, lymph nodes, spleen, lung, liver, spinal cord, kidney. Expressed in monocyte-derived dendritic and mast cells.</text>
</comment>
<comment type="similarity">
    <text evidence="12">Belongs to the CD200R family.</text>
</comment>
<dbReference type="EMBL" id="AY284975">
    <property type="protein sequence ID" value="AAQ19772.1"/>
    <property type="molecule type" value="mRNA"/>
</dbReference>
<dbReference type="EMBL" id="AF283760">
    <property type="protein sequence ID" value="AAN61171.1"/>
    <property type="molecule type" value="mRNA"/>
</dbReference>
<dbReference type="EMBL" id="AF497548">
    <property type="protein sequence ID" value="AAM16157.2"/>
    <property type="molecule type" value="mRNA"/>
</dbReference>
<dbReference type="EMBL" id="AF497549">
    <property type="protein sequence ID" value="AAM16158.2"/>
    <property type="molecule type" value="mRNA"/>
</dbReference>
<dbReference type="EMBL" id="AF497550">
    <property type="protein sequence ID" value="AAM16159.2"/>
    <property type="molecule type" value="mRNA"/>
</dbReference>
<dbReference type="EMBL" id="AF495380">
    <property type="protein sequence ID" value="AAM14622.2"/>
    <property type="molecule type" value="mRNA"/>
</dbReference>
<dbReference type="EMBL" id="AY358910">
    <property type="protein sequence ID" value="AAQ89269.2"/>
    <property type="molecule type" value="mRNA"/>
</dbReference>
<dbReference type="EMBL" id="AK126349">
    <property type="protein sequence ID" value="BAG54311.1"/>
    <property type="molecule type" value="mRNA"/>
</dbReference>
<dbReference type="EMBL" id="AK293071">
    <property type="protein sequence ID" value="BAF85760.1"/>
    <property type="molecule type" value="mRNA"/>
</dbReference>
<dbReference type="EMBL" id="AC074044">
    <property type="status" value="NOT_ANNOTATED_CDS"/>
    <property type="molecule type" value="Genomic_DNA"/>
</dbReference>
<dbReference type="EMBL" id="CH471052">
    <property type="protein sequence ID" value="EAW79657.1"/>
    <property type="molecule type" value="Genomic_DNA"/>
</dbReference>
<dbReference type="EMBL" id="CH471052">
    <property type="protein sequence ID" value="EAW79658.1"/>
    <property type="molecule type" value="Genomic_DNA"/>
</dbReference>
<dbReference type="EMBL" id="BC069661">
    <property type="protein sequence ID" value="AAH69661.1"/>
    <property type="molecule type" value="mRNA"/>
</dbReference>
<dbReference type="EMBL" id="BC069721">
    <property type="protein sequence ID" value="AAH69721.1"/>
    <property type="molecule type" value="mRNA"/>
</dbReference>
<dbReference type="EMBL" id="BC069743">
    <property type="protein sequence ID" value="AAH69743.1"/>
    <property type="molecule type" value="mRNA"/>
</dbReference>
<dbReference type="EMBL" id="BC093890">
    <property type="protein sequence ID" value="AAH93890.1"/>
    <property type="molecule type" value="mRNA"/>
</dbReference>
<dbReference type="CCDS" id="CCDS2969.1">
    <molecule id="Q8TD46-4"/>
</dbReference>
<dbReference type="CCDS" id="CCDS2970.1">
    <molecule id="Q8TD46-1"/>
</dbReference>
<dbReference type="CCDS" id="CCDS46889.1">
    <molecule id="Q8TD46-2"/>
</dbReference>
<dbReference type="CCDS" id="CCDS54623.1">
    <molecule id="Q8TD46-3"/>
</dbReference>
<dbReference type="RefSeq" id="NP_620161.1">
    <molecule id="Q8TD46-4"/>
    <property type="nucleotide sequence ID" value="NM_138806.4"/>
</dbReference>
<dbReference type="RefSeq" id="NP_620385.1">
    <molecule id="Q8TD46-2"/>
    <property type="nucleotide sequence ID" value="NM_138939.3"/>
</dbReference>
<dbReference type="RefSeq" id="NP_620386.1">
    <molecule id="Q8TD46-3"/>
    <property type="nucleotide sequence ID" value="NM_138940.3"/>
</dbReference>
<dbReference type="RefSeq" id="NP_740750.1">
    <molecule id="Q8TD46-1"/>
    <property type="nucleotide sequence ID" value="NM_170780.3"/>
</dbReference>
<dbReference type="PDB" id="9GWT">
    <property type="method" value="X-ray"/>
    <property type="resolution" value="2.89 A"/>
    <property type="chains" value="P=52-266"/>
</dbReference>
<dbReference type="PDBsum" id="9GWT"/>
<dbReference type="SMR" id="Q8TD46"/>
<dbReference type="BioGRID" id="126281">
    <property type="interactions" value="23"/>
</dbReference>
<dbReference type="FunCoup" id="Q8TD46">
    <property type="interactions" value="19"/>
</dbReference>
<dbReference type="IntAct" id="Q8TD46">
    <property type="interactions" value="16"/>
</dbReference>
<dbReference type="STRING" id="9606.ENSP00000311035"/>
<dbReference type="GlyCosmos" id="Q8TD46">
    <property type="glycosylation" value="8 sites, No reported glycans"/>
</dbReference>
<dbReference type="GlyGen" id="Q8TD46">
    <property type="glycosylation" value="10 sites, 1 O-linked glycan (1 site)"/>
</dbReference>
<dbReference type="iPTMnet" id="Q8TD46"/>
<dbReference type="PhosphoSitePlus" id="Q8TD46"/>
<dbReference type="SwissPalm" id="Q8TD46"/>
<dbReference type="BioMuta" id="CD200R1"/>
<dbReference type="DMDM" id="26006823"/>
<dbReference type="jPOST" id="Q8TD46"/>
<dbReference type="MassIVE" id="Q8TD46"/>
<dbReference type="PeptideAtlas" id="Q8TD46"/>
<dbReference type="ProteomicsDB" id="74236">
    <molecule id="Q8TD46-1"/>
</dbReference>
<dbReference type="ProteomicsDB" id="74237">
    <molecule id="Q8TD46-2"/>
</dbReference>
<dbReference type="ProteomicsDB" id="74238">
    <molecule id="Q8TD46-3"/>
</dbReference>
<dbReference type="ProteomicsDB" id="74239">
    <molecule id="Q8TD46-4"/>
</dbReference>
<dbReference type="ABCD" id="Q8TD46">
    <property type="antibodies" value="1 sequenced antibody"/>
</dbReference>
<dbReference type="Antibodypedia" id="16344">
    <property type="antibodies" value="704 antibodies from 34 providers"/>
</dbReference>
<dbReference type="DNASU" id="131450"/>
<dbReference type="Ensembl" id="ENST00000308611.8">
    <molecule id="Q8TD46-4"/>
    <property type="protein sequence ID" value="ENSP00000311035.3"/>
    <property type="gene ID" value="ENSG00000163606.11"/>
</dbReference>
<dbReference type="Ensembl" id="ENST00000440122.6">
    <molecule id="Q8TD46-2"/>
    <property type="protein sequence ID" value="ENSP00000405733.2"/>
    <property type="gene ID" value="ENSG00000163606.11"/>
</dbReference>
<dbReference type="Ensembl" id="ENST00000471858.5">
    <molecule id="Q8TD46-1"/>
    <property type="protein sequence ID" value="ENSP00000418928.1"/>
    <property type="gene ID" value="ENSG00000163606.11"/>
</dbReference>
<dbReference type="Ensembl" id="ENST00000490004.1">
    <molecule id="Q8TD46-3"/>
    <property type="protein sequence ID" value="ENSP00000418801.1"/>
    <property type="gene ID" value="ENSG00000163606.11"/>
</dbReference>
<dbReference type="GeneID" id="131450"/>
<dbReference type="KEGG" id="hsa:131450"/>
<dbReference type="MANE-Select" id="ENST00000308611.8">
    <property type="protein sequence ID" value="ENSP00000311035.3"/>
    <property type="RefSeq nucleotide sequence ID" value="NM_138806.4"/>
    <property type="RefSeq protein sequence ID" value="NP_620161.1"/>
</dbReference>
<dbReference type="UCSC" id="uc003dzj.2">
    <molecule id="Q8TD46-4"/>
    <property type="organism name" value="human"/>
</dbReference>
<dbReference type="AGR" id="HGNC:24235"/>
<dbReference type="CTD" id="131450"/>
<dbReference type="DisGeNET" id="131450"/>
<dbReference type="GeneCards" id="CD200R1"/>
<dbReference type="HGNC" id="HGNC:24235">
    <property type="gene designation" value="CD200R1"/>
</dbReference>
<dbReference type="HPA" id="ENSG00000163606">
    <property type="expression patterns" value="Tissue enhanced (lymphoid)"/>
</dbReference>
<dbReference type="MIM" id="607546">
    <property type="type" value="gene"/>
</dbReference>
<dbReference type="neXtProt" id="NX_Q8TD46"/>
<dbReference type="OpenTargets" id="ENSG00000163606"/>
<dbReference type="PharmGKB" id="PA134922446"/>
<dbReference type="VEuPathDB" id="HostDB:ENSG00000163606"/>
<dbReference type="eggNOG" id="ENOG502S9IV">
    <property type="taxonomic scope" value="Eukaryota"/>
</dbReference>
<dbReference type="GeneTree" id="ENSGT00390000014496"/>
<dbReference type="HOGENOM" id="CLU_069156_0_0_1"/>
<dbReference type="InParanoid" id="Q8TD46"/>
<dbReference type="OMA" id="MKAGTNM"/>
<dbReference type="OrthoDB" id="8915654at2759"/>
<dbReference type="PAN-GO" id="Q8TD46">
    <property type="GO annotations" value="2 GO annotations based on evolutionary models"/>
</dbReference>
<dbReference type="PhylomeDB" id="Q8TD46"/>
<dbReference type="TreeFam" id="TF335960"/>
<dbReference type="PathwayCommons" id="Q8TD46"/>
<dbReference type="Reactome" id="R-HSA-198933">
    <property type="pathway name" value="Immunoregulatory interactions between a Lymphoid and a non-Lymphoid cell"/>
</dbReference>
<dbReference type="SignaLink" id="Q8TD46"/>
<dbReference type="BioGRID-ORCS" id="131450">
    <property type="hits" value="17 hits in 1152 CRISPR screens"/>
</dbReference>
<dbReference type="ChiTaRS" id="CD200R1">
    <property type="organism name" value="human"/>
</dbReference>
<dbReference type="GeneWiki" id="CD200R1"/>
<dbReference type="GenomeRNAi" id="131450"/>
<dbReference type="Pharos" id="Q8TD46">
    <property type="development level" value="Tbio"/>
</dbReference>
<dbReference type="PRO" id="PR:Q8TD46"/>
<dbReference type="Proteomes" id="UP000005640">
    <property type="component" value="Chromosome 3"/>
</dbReference>
<dbReference type="RNAct" id="Q8TD46">
    <property type="molecule type" value="protein"/>
</dbReference>
<dbReference type="Bgee" id="ENSG00000163606">
    <property type="expression patterns" value="Expressed in male germ line stem cell (sensu Vertebrata) in testis and 117 other cell types or tissues"/>
</dbReference>
<dbReference type="ExpressionAtlas" id="Q8TD46">
    <property type="expression patterns" value="baseline and differential"/>
</dbReference>
<dbReference type="GO" id="GO:0009986">
    <property type="term" value="C:cell surface"/>
    <property type="evidence" value="ECO:0000314"/>
    <property type="project" value="ARUK-UCL"/>
</dbReference>
<dbReference type="GO" id="GO:0009897">
    <property type="term" value="C:external side of plasma membrane"/>
    <property type="evidence" value="ECO:0000318"/>
    <property type="project" value="GO_Central"/>
</dbReference>
<dbReference type="GO" id="GO:0005576">
    <property type="term" value="C:extracellular region"/>
    <property type="evidence" value="ECO:0007669"/>
    <property type="project" value="UniProtKB-SubCell"/>
</dbReference>
<dbReference type="GO" id="GO:0005886">
    <property type="term" value="C:plasma membrane"/>
    <property type="evidence" value="ECO:0000314"/>
    <property type="project" value="HPA"/>
</dbReference>
<dbReference type="GO" id="GO:0043235">
    <property type="term" value="C:receptor complex"/>
    <property type="evidence" value="ECO:0000314"/>
    <property type="project" value="MGI"/>
</dbReference>
<dbReference type="GO" id="GO:0140081">
    <property type="term" value="F:glycosylated region protein binding"/>
    <property type="evidence" value="ECO:0000304"/>
    <property type="project" value="ARUK-UCL"/>
</dbReference>
<dbReference type="GO" id="GO:0019763">
    <property type="term" value="F:immunoglobulin receptor activity"/>
    <property type="evidence" value="ECO:0000304"/>
    <property type="project" value="ARUK-UCL"/>
</dbReference>
<dbReference type="GO" id="GO:0038023">
    <property type="term" value="F:signaling receptor activity"/>
    <property type="evidence" value="ECO:0000318"/>
    <property type="project" value="GO_Central"/>
</dbReference>
<dbReference type="GO" id="GO:0034113">
    <property type="term" value="P:heterotypic cell-cell adhesion"/>
    <property type="evidence" value="ECO:0000250"/>
    <property type="project" value="ARUK-UCL"/>
</dbReference>
<dbReference type="GO" id="GO:0035556">
    <property type="term" value="P:intracellular signal transduction"/>
    <property type="evidence" value="ECO:0000304"/>
    <property type="project" value="ARUK-UCL"/>
</dbReference>
<dbReference type="GO" id="GO:0032715">
    <property type="term" value="P:negative regulation of interleukin-6 production"/>
    <property type="evidence" value="ECO:0000250"/>
    <property type="project" value="ARUK-UCL"/>
</dbReference>
<dbReference type="GO" id="GO:1905522">
    <property type="term" value="P:negative regulation of macrophage migration"/>
    <property type="evidence" value="ECO:0000250"/>
    <property type="project" value="ARUK-UCL"/>
</dbReference>
<dbReference type="GO" id="GO:0150079">
    <property type="term" value="P:negative regulation of neuroinflammatory response"/>
    <property type="evidence" value="ECO:0000250"/>
    <property type="project" value="ARUK-UCL"/>
</dbReference>
<dbReference type="GO" id="GO:2000405">
    <property type="term" value="P:negative regulation of T cell migration"/>
    <property type="evidence" value="ECO:0000250"/>
    <property type="project" value="ARUK-UCL"/>
</dbReference>
<dbReference type="GO" id="GO:0150077">
    <property type="term" value="P:regulation of neuroinflammatory response"/>
    <property type="evidence" value="ECO:0000250"/>
    <property type="project" value="ARUK-UCL"/>
</dbReference>
<dbReference type="GO" id="GO:0007165">
    <property type="term" value="P:signal transduction"/>
    <property type="evidence" value="ECO:0000304"/>
    <property type="project" value="ARUK-UCL"/>
</dbReference>
<dbReference type="FunFam" id="2.60.40.10:FF:000584">
    <property type="entry name" value="Cell surface glycoprotein CD200 receptor 1"/>
    <property type="match status" value="1"/>
</dbReference>
<dbReference type="FunFam" id="2.60.40.10:FF:000769">
    <property type="entry name" value="Cell surface glycoprotein CD200 receptor 1"/>
    <property type="match status" value="1"/>
</dbReference>
<dbReference type="Gene3D" id="2.60.40.10">
    <property type="entry name" value="Immunoglobulins"/>
    <property type="match status" value="2"/>
</dbReference>
<dbReference type="InterPro" id="IPR040012">
    <property type="entry name" value="CD200R"/>
</dbReference>
<dbReference type="InterPro" id="IPR013162">
    <property type="entry name" value="CD80_C2-set"/>
</dbReference>
<dbReference type="InterPro" id="IPR007110">
    <property type="entry name" value="Ig-like_dom"/>
</dbReference>
<dbReference type="InterPro" id="IPR036179">
    <property type="entry name" value="Ig-like_dom_sf"/>
</dbReference>
<dbReference type="InterPro" id="IPR013783">
    <property type="entry name" value="Ig-like_fold"/>
</dbReference>
<dbReference type="PANTHER" id="PTHR21462:SF4">
    <property type="entry name" value="CELL SURFACE GLYCOPROTEIN CD200 RECEPTOR 1"/>
    <property type="match status" value="1"/>
</dbReference>
<dbReference type="PANTHER" id="PTHR21462">
    <property type="entry name" value="CELL SURFACE GLYCOPROTEIN OX2 RECEPTOR PRECURSOR"/>
    <property type="match status" value="1"/>
</dbReference>
<dbReference type="Pfam" id="PF08205">
    <property type="entry name" value="C2-set_2"/>
    <property type="match status" value="1"/>
</dbReference>
<dbReference type="SUPFAM" id="SSF48726">
    <property type="entry name" value="Immunoglobulin"/>
    <property type="match status" value="2"/>
</dbReference>
<dbReference type="PROSITE" id="PS50835">
    <property type="entry name" value="IG_LIKE"/>
    <property type="match status" value="1"/>
</dbReference>
<keyword id="KW-0002">3D-structure</keyword>
<keyword id="KW-0025">Alternative splicing</keyword>
<keyword id="KW-1003">Cell membrane</keyword>
<keyword id="KW-0903">Direct protein sequencing</keyword>
<keyword id="KW-1015">Disulfide bond</keyword>
<keyword id="KW-0325">Glycoprotein</keyword>
<keyword id="KW-0945">Host-virus interaction</keyword>
<keyword id="KW-0472">Membrane</keyword>
<keyword id="KW-1267">Proteomics identification</keyword>
<keyword id="KW-0675">Receptor</keyword>
<keyword id="KW-1185">Reference proteome</keyword>
<keyword id="KW-0964">Secreted</keyword>
<keyword id="KW-0732">Signal</keyword>
<keyword id="KW-0812">Transmembrane</keyword>
<keyword id="KW-1133">Transmembrane helix</keyword>
<feature type="signal peptide" evidence="2">
    <location>
        <begin position="1"/>
        <end position="24"/>
    </location>
</feature>
<feature type="chain" id="PRO_0000015128" description="Cell surface glycoprotein CD200 receptor 1" evidence="2">
    <location>
        <begin position="25"/>
        <end position="348"/>
    </location>
</feature>
<feature type="topological domain" description="Extracellular" evidence="2">
    <location>
        <begin position="29"/>
        <end position="265"/>
    </location>
</feature>
<feature type="transmembrane region" description="Helical" evidence="2">
    <location>
        <begin position="266"/>
        <end position="286"/>
    </location>
</feature>
<feature type="topological domain" description="Cytoplasmic" evidence="2">
    <location>
        <begin position="287"/>
        <end position="348"/>
    </location>
</feature>
<feature type="domain" description="Ig-like C2-type" evidence="3">
    <location>
        <begin position="160"/>
        <end position="251"/>
    </location>
</feature>
<feature type="glycosylation site" description="N-linked (GlcNAc...) asparagine" evidence="2">
    <location>
        <position position="31"/>
    </location>
</feature>
<feature type="glycosylation site" description="N-linked (GlcNAc...) asparagine" evidence="2">
    <location>
        <position position="60"/>
    </location>
</feature>
<feature type="glycosylation site" description="N-linked (GlcNAc...) asparagine" evidence="2">
    <location>
        <position position="69"/>
    </location>
</feature>
<feature type="glycosylation site" description="N-linked (GlcNAc...) asparagine" evidence="2">
    <location>
        <position position="116"/>
    </location>
</feature>
<feature type="glycosylation site" description="N-linked (GlcNAc...) asparagine" evidence="2">
    <location>
        <position position="122"/>
    </location>
</feature>
<feature type="glycosylation site" description="N-linked (GlcNAc...) asparagine" evidence="2">
    <location>
        <position position="185"/>
    </location>
</feature>
<feature type="glycosylation site" description="N-linked (GlcNAc...) asparagine" evidence="2">
    <location>
        <position position="218"/>
    </location>
</feature>
<feature type="glycosylation site" description="N-linked (GlcNAc...) asparagine" evidence="2">
    <location>
        <position position="233"/>
    </location>
</feature>
<feature type="glycosylation site" description="N-linked (GlcNAc...) asparagine" evidence="2">
    <location>
        <position position="247"/>
    </location>
</feature>
<feature type="disulfide bond" evidence="3">
    <location>
        <begin position="83"/>
        <end position="155"/>
    </location>
</feature>
<feature type="disulfide bond" evidence="3">
    <location>
        <begin position="107"/>
        <end position="123"/>
    </location>
</feature>
<feature type="disulfide bond" evidence="3">
    <location>
        <begin position="190"/>
        <end position="239"/>
    </location>
</feature>
<feature type="disulfide bond" evidence="3">
    <location>
        <begin position="209"/>
        <end position="227"/>
    </location>
</feature>
<feature type="splice variant" id="VSP_061888" description="In isoform 1 and isoform 3." evidence="8 9 10 11">
    <original>AEAEGAAQPNNSLMLQTSKENHAL</original>
    <variation>A</variation>
    <location>
        <begin position="22"/>
        <end position="45"/>
    </location>
</feature>
<feature type="splice variant" id="VSP_061889" description="In isoform 2 and isoform 3." evidence="11">
    <original>VTPEVTLFQNRNRTA</original>
    <variation>GKEHHILRYFTSPDL</variation>
    <location>
        <begin position="174"/>
        <end position="188"/>
    </location>
</feature>
<feature type="splice variant" id="VSP_061890" description="In isoform 2 and isoform 3." evidence="11">
    <location>
        <begin position="189"/>
        <end position="348"/>
    </location>
</feature>
<feature type="sequence variant" id="VAR_014352" description="In dbSNP:rs2171509." evidence="5 6 7">
    <original>K</original>
    <variation>R</variation>
    <location>
        <position position="112"/>
    </location>
</feature>
<feature type="sequence variant" id="VAR_014353" description="In dbSNP:rs4596117." evidence="5 6 7">
    <original>T</original>
    <variation>P</variation>
    <location>
        <position position="144"/>
    </location>
</feature>
<feature type="sequence variant" id="VAR_014354" description="In dbSNP:rs9826308." evidence="5 6 7">
    <original>H</original>
    <variation>Q</variation>
    <location>
        <position position="200"/>
    </location>
</feature>
<feature type="sequence variant" id="VAR_031022" description="In dbSNP:rs9865242." evidence="5 6">
    <original>E</original>
    <variation>Q</variation>
    <location>
        <position position="335"/>
    </location>
</feature>
<feature type="sequence conflict" description="In Ref. 4; AAQ89269." evidence="12" ref="4">
    <original>V</original>
    <variation>L</variation>
    <location>
        <position position="178"/>
    </location>
</feature>
<reference key="1">
    <citation type="journal article" date="2004" name="Am. J. Reprod. Immunol.">
        <title>Structural and functional heterogeneity in the CD200R family of immunoregulatory molecules and their expression at the feto-maternal interface.</title>
        <authorList>
            <person name="Gorczynski R.M."/>
            <person name="Chen Z."/>
            <person name="Clark D.A."/>
            <person name="Kai Y."/>
            <person name="Lee L."/>
            <person name="Nachman J."/>
            <person name="Wong S."/>
            <person name="Marsden P."/>
        </authorList>
    </citation>
    <scope>NUCLEOTIDE SEQUENCE [MRNA] (ISOFORM 4)</scope>
</reference>
<reference key="2">
    <citation type="submission" date="2000-06" db="EMBL/GenBank/DDBJ databases">
        <title>K14, the HHV-8 viral OX2 homolog interacts with the human OX2 receptor with identical affinity and kinetics as the host OX2 protein.</title>
        <authorList>
            <person name="Wright G.J."/>
            <person name="Brown M.H."/>
            <person name="Barclay N."/>
        </authorList>
    </citation>
    <scope>NUCLEOTIDE SEQUENCE [MRNA] (ISOFORM 1)</scope>
    <scope>INTERACTION WITH HERPES VIRUS 8 PROTEIN VOX2/K14 (MICROBIAL INFECTION)</scope>
    <scope>VARIANTS ARG-112; PRO-144 AND GLN-200</scope>
</reference>
<reference key="3">
    <citation type="submission" date="2002-04" db="EMBL/GenBank/DDBJ databases">
        <title>Characterization of human CD200R gene.</title>
        <authorList>
            <person name="Suarez A."/>
            <person name="Vieites J.M."/>
            <person name="De la Torre R."/>
            <person name="Ortega M.A."/>
            <person name="Gil A."/>
            <person name="Sanchez-Pozo A."/>
        </authorList>
    </citation>
    <scope>NUCLEOTIDE SEQUENCE [MRNA] (ISOFORMS 1; 2; 3 AND 4)</scope>
</reference>
<reference key="4">
    <citation type="journal article" date="2003" name="Genome Res.">
        <title>The secreted protein discovery initiative (SPDI), a large-scale effort to identify novel human secreted and transmembrane proteins: a bioinformatics assessment.</title>
        <authorList>
            <person name="Clark H.F."/>
            <person name="Gurney A.L."/>
            <person name="Abaya E."/>
            <person name="Baker K."/>
            <person name="Baldwin D.T."/>
            <person name="Brush J."/>
            <person name="Chen J."/>
            <person name="Chow B."/>
            <person name="Chui C."/>
            <person name="Crowley C."/>
            <person name="Currell B."/>
            <person name="Deuel B."/>
            <person name="Dowd P."/>
            <person name="Eaton D."/>
            <person name="Foster J.S."/>
            <person name="Grimaldi C."/>
            <person name="Gu Q."/>
            <person name="Hass P.E."/>
            <person name="Heldens S."/>
            <person name="Huang A."/>
            <person name="Kim H.S."/>
            <person name="Klimowski L."/>
            <person name="Jin Y."/>
            <person name="Johnson S."/>
            <person name="Lee J."/>
            <person name="Lewis L."/>
            <person name="Liao D."/>
            <person name="Mark M.R."/>
            <person name="Robbie E."/>
            <person name="Sanchez C."/>
            <person name="Schoenfeld J."/>
            <person name="Seshagiri S."/>
            <person name="Simmons L."/>
            <person name="Singh J."/>
            <person name="Smith V."/>
            <person name="Stinson J."/>
            <person name="Vagts A."/>
            <person name="Vandlen R.L."/>
            <person name="Watanabe C."/>
            <person name="Wieand D."/>
            <person name="Woods K."/>
            <person name="Xie M.-H."/>
            <person name="Yansura D.G."/>
            <person name="Yi S."/>
            <person name="Yu G."/>
            <person name="Yuan J."/>
            <person name="Zhang M."/>
            <person name="Zhang Z."/>
            <person name="Goddard A.D."/>
            <person name="Wood W.I."/>
            <person name="Godowski P.J."/>
            <person name="Gray A.M."/>
        </authorList>
    </citation>
    <scope>NUCLEOTIDE SEQUENCE [LARGE SCALE MRNA] (ISOFORM 4)</scope>
    <scope>VARIANTS ARG-112; PRO-144; GLN-200 AND GLN-335</scope>
</reference>
<reference key="5">
    <citation type="journal article" date="2004" name="Nat. Genet.">
        <title>Complete sequencing and characterization of 21,243 full-length human cDNAs.</title>
        <authorList>
            <person name="Ota T."/>
            <person name="Suzuki Y."/>
            <person name="Nishikawa T."/>
            <person name="Otsuki T."/>
            <person name="Sugiyama T."/>
            <person name="Irie R."/>
            <person name="Wakamatsu A."/>
            <person name="Hayashi K."/>
            <person name="Sato H."/>
            <person name="Nagai K."/>
            <person name="Kimura K."/>
            <person name="Makita H."/>
            <person name="Sekine M."/>
            <person name="Obayashi M."/>
            <person name="Nishi T."/>
            <person name="Shibahara T."/>
            <person name="Tanaka T."/>
            <person name="Ishii S."/>
            <person name="Yamamoto J."/>
            <person name="Saito K."/>
            <person name="Kawai Y."/>
            <person name="Isono Y."/>
            <person name="Nakamura Y."/>
            <person name="Nagahari K."/>
            <person name="Murakami K."/>
            <person name="Yasuda T."/>
            <person name="Iwayanagi T."/>
            <person name="Wagatsuma M."/>
            <person name="Shiratori A."/>
            <person name="Sudo H."/>
            <person name="Hosoiri T."/>
            <person name="Kaku Y."/>
            <person name="Kodaira H."/>
            <person name="Kondo H."/>
            <person name="Sugawara M."/>
            <person name="Takahashi M."/>
            <person name="Kanda K."/>
            <person name="Yokoi T."/>
            <person name="Furuya T."/>
            <person name="Kikkawa E."/>
            <person name="Omura Y."/>
            <person name="Abe K."/>
            <person name="Kamihara K."/>
            <person name="Katsuta N."/>
            <person name="Sato K."/>
            <person name="Tanikawa M."/>
            <person name="Yamazaki M."/>
            <person name="Ninomiya K."/>
            <person name="Ishibashi T."/>
            <person name="Yamashita H."/>
            <person name="Murakawa K."/>
            <person name="Fujimori K."/>
            <person name="Tanai H."/>
            <person name="Kimata M."/>
            <person name="Watanabe M."/>
            <person name="Hiraoka S."/>
            <person name="Chiba Y."/>
            <person name="Ishida S."/>
            <person name="Ono Y."/>
            <person name="Takiguchi S."/>
            <person name="Watanabe S."/>
            <person name="Yosida M."/>
            <person name="Hotuta T."/>
            <person name="Kusano J."/>
            <person name="Kanehori K."/>
            <person name="Takahashi-Fujii A."/>
            <person name="Hara H."/>
            <person name="Tanase T.-O."/>
            <person name="Nomura Y."/>
            <person name="Togiya S."/>
            <person name="Komai F."/>
            <person name="Hara R."/>
            <person name="Takeuchi K."/>
            <person name="Arita M."/>
            <person name="Imose N."/>
            <person name="Musashino K."/>
            <person name="Yuuki H."/>
            <person name="Oshima A."/>
            <person name="Sasaki N."/>
            <person name="Aotsuka S."/>
            <person name="Yoshikawa Y."/>
            <person name="Matsunawa H."/>
            <person name="Ichihara T."/>
            <person name="Shiohata N."/>
            <person name="Sano S."/>
            <person name="Moriya S."/>
            <person name="Momiyama H."/>
            <person name="Satoh N."/>
            <person name="Takami S."/>
            <person name="Terashima Y."/>
            <person name="Suzuki O."/>
            <person name="Nakagawa S."/>
            <person name="Senoh A."/>
            <person name="Mizoguchi H."/>
            <person name="Goto Y."/>
            <person name="Shimizu F."/>
            <person name="Wakebe H."/>
            <person name="Hishigaki H."/>
            <person name="Watanabe T."/>
            <person name="Sugiyama A."/>
            <person name="Takemoto M."/>
            <person name="Kawakami B."/>
            <person name="Yamazaki M."/>
            <person name="Watanabe K."/>
            <person name="Kumagai A."/>
            <person name="Itakura S."/>
            <person name="Fukuzumi Y."/>
            <person name="Fujimori Y."/>
            <person name="Komiyama M."/>
            <person name="Tashiro H."/>
            <person name="Tanigami A."/>
            <person name="Fujiwara T."/>
            <person name="Ono T."/>
            <person name="Yamada K."/>
            <person name="Fujii Y."/>
            <person name="Ozaki K."/>
            <person name="Hirao M."/>
            <person name="Ohmori Y."/>
            <person name="Kawabata A."/>
            <person name="Hikiji T."/>
            <person name="Kobatake N."/>
            <person name="Inagaki H."/>
            <person name="Ikema Y."/>
            <person name="Okamoto S."/>
            <person name="Okitani R."/>
            <person name="Kawakami T."/>
            <person name="Noguchi S."/>
            <person name="Itoh T."/>
            <person name="Shigeta K."/>
            <person name="Senba T."/>
            <person name="Matsumura K."/>
            <person name="Nakajima Y."/>
            <person name="Mizuno T."/>
            <person name="Morinaga M."/>
            <person name="Sasaki M."/>
            <person name="Togashi T."/>
            <person name="Oyama M."/>
            <person name="Hata H."/>
            <person name="Watanabe M."/>
            <person name="Komatsu T."/>
            <person name="Mizushima-Sugano J."/>
            <person name="Satoh T."/>
            <person name="Shirai Y."/>
            <person name="Takahashi Y."/>
            <person name="Nakagawa K."/>
            <person name="Okumura K."/>
            <person name="Nagase T."/>
            <person name="Nomura N."/>
            <person name="Kikuchi H."/>
            <person name="Masuho Y."/>
            <person name="Yamashita R."/>
            <person name="Nakai K."/>
            <person name="Yada T."/>
            <person name="Nakamura Y."/>
            <person name="Ohara O."/>
            <person name="Isogai T."/>
            <person name="Sugano S."/>
        </authorList>
    </citation>
    <scope>NUCLEOTIDE SEQUENCE [LARGE SCALE MRNA] (ISOFORMS 1 AND 4)</scope>
    <scope>VARIANTS ARG-112; PRO-144; GLN-200 AND GLN-335</scope>
    <source>
        <tissue>Trachea</tissue>
        <tissue>Uterus</tissue>
    </source>
</reference>
<reference key="6">
    <citation type="journal article" date="2006" name="Nature">
        <title>The DNA sequence, annotation and analysis of human chromosome 3.</title>
        <authorList>
            <person name="Muzny D.M."/>
            <person name="Scherer S.E."/>
            <person name="Kaul R."/>
            <person name="Wang J."/>
            <person name="Yu J."/>
            <person name="Sudbrak R."/>
            <person name="Buhay C.J."/>
            <person name="Chen R."/>
            <person name="Cree A."/>
            <person name="Ding Y."/>
            <person name="Dugan-Rocha S."/>
            <person name="Gill R."/>
            <person name="Gunaratne P."/>
            <person name="Harris R.A."/>
            <person name="Hawes A.C."/>
            <person name="Hernandez J."/>
            <person name="Hodgson A.V."/>
            <person name="Hume J."/>
            <person name="Jackson A."/>
            <person name="Khan Z.M."/>
            <person name="Kovar-Smith C."/>
            <person name="Lewis L.R."/>
            <person name="Lozado R.J."/>
            <person name="Metzker M.L."/>
            <person name="Milosavljevic A."/>
            <person name="Miner G.R."/>
            <person name="Morgan M.B."/>
            <person name="Nazareth L.V."/>
            <person name="Scott G."/>
            <person name="Sodergren E."/>
            <person name="Song X.-Z."/>
            <person name="Steffen D."/>
            <person name="Wei S."/>
            <person name="Wheeler D.A."/>
            <person name="Wright M.W."/>
            <person name="Worley K.C."/>
            <person name="Yuan Y."/>
            <person name="Zhang Z."/>
            <person name="Adams C.Q."/>
            <person name="Ansari-Lari M.A."/>
            <person name="Ayele M."/>
            <person name="Brown M.J."/>
            <person name="Chen G."/>
            <person name="Chen Z."/>
            <person name="Clendenning J."/>
            <person name="Clerc-Blankenburg K.P."/>
            <person name="Chen R."/>
            <person name="Chen Z."/>
            <person name="Davis C."/>
            <person name="Delgado O."/>
            <person name="Dinh H.H."/>
            <person name="Dong W."/>
            <person name="Draper H."/>
            <person name="Ernst S."/>
            <person name="Fu G."/>
            <person name="Gonzalez-Garay M.L."/>
            <person name="Garcia D.K."/>
            <person name="Gillett W."/>
            <person name="Gu J."/>
            <person name="Hao B."/>
            <person name="Haugen E."/>
            <person name="Havlak P."/>
            <person name="He X."/>
            <person name="Hennig S."/>
            <person name="Hu S."/>
            <person name="Huang W."/>
            <person name="Jackson L.R."/>
            <person name="Jacob L.S."/>
            <person name="Kelly S.H."/>
            <person name="Kube M."/>
            <person name="Levy R."/>
            <person name="Li Z."/>
            <person name="Liu B."/>
            <person name="Liu J."/>
            <person name="Liu W."/>
            <person name="Lu J."/>
            <person name="Maheshwari M."/>
            <person name="Nguyen B.-V."/>
            <person name="Okwuonu G.O."/>
            <person name="Palmeiri A."/>
            <person name="Pasternak S."/>
            <person name="Perez L.M."/>
            <person name="Phelps K.A."/>
            <person name="Plopper F.J."/>
            <person name="Qiang B."/>
            <person name="Raymond C."/>
            <person name="Rodriguez R."/>
            <person name="Saenphimmachak C."/>
            <person name="Santibanez J."/>
            <person name="Shen H."/>
            <person name="Shen Y."/>
            <person name="Subramanian S."/>
            <person name="Tabor P.E."/>
            <person name="Verduzco D."/>
            <person name="Waldron L."/>
            <person name="Wang J."/>
            <person name="Wang J."/>
            <person name="Wang Q."/>
            <person name="Williams G.A."/>
            <person name="Wong G.K.-S."/>
            <person name="Yao Z."/>
            <person name="Zhang J."/>
            <person name="Zhang X."/>
            <person name="Zhao G."/>
            <person name="Zhou J."/>
            <person name="Zhou Y."/>
            <person name="Nelson D."/>
            <person name="Lehrach H."/>
            <person name="Reinhardt R."/>
            <person name="Naylor S.L."/>
            <person name="Yang H."/>
            <person name="Olson M."/>
            <person name="Weinstock G."/>
            <person name="Gibbs R.A."/>
        </authorList>
    </citation>
    <scope>NUCLEOTIDE SEQUENCE [LARGE SCALE GENOMIC DNA]</scope>
</reference>
<reference key="7">
    <citation type="submission" date="2005-09" db="EMBL/GenBank/DDBJ databases">
        <authorList>
            <person name="Mural R.J."/>
            <person name="Istrail S."/>
            <person name="Sutton G.G."/>
            <person name="Florea L."/>
            <person name="Halpern A.L."/>
            <person name="Mobarry C.M."/>
            <person name="Lippert R."/>
            <person name="Walenz B."/>
            <person name="Shatkay H."/>
            <person name="Dew I."/>
            <person name="Miller J.R."/>
            <person name="Flanigan M.J."/>
            <person name="Edwards N.J."/>
            <person name="Bolanos R."/>
            <person name="Fasulo D."/>
            <person name="Halldorsson B.V."/>
            <person name="Hannenhalli S."/>
            <person name="Turner R."/>
            <person name="Yooseph S."/>
            <person name="Lu F."/>
            <person name="Nusskern D.R."/>
            <person name="Shue B.C."/>
            <person name="Zheng X.H."/>
            <person name="Zhong F."/>
            <person name="Delcher A.L."/>
            <person name="Huson D.H."/>
            <person name="Kravitz S.A."/>
            <person name="Mouchard L."/>
            <person name="Reinert K."/>
            <person name="Remington K.A."/>
            <person name="Clark A.G."/>
            <person name="Waterman M.S."/>
            <person name="Eichler E.E."/>
            <person name="Adams M.D."/>
            <person name="Hunkapiller M.W."/>
            <person name="Myers E.W."/>
            <person name="Venter J.C."/>
        </authorList>
    </citation>
    <scope>NUCLEOTIDE SEQUENCE [LARGE SCALE GENOMIC DNA]</scope>
</reference>
<reference key="8">
    <citation type="journal article" date="2004" name="Genome Res.">
        <title>The status, quality, and expansion of the NIH full-length cDNA project: the Mammalian Gene Collection (MGC).</title>
        <authorList>
            <consortium name="The MGC Project Team"/>
        </authorList>
    </citation>
    <scope>NUCLEOTIDE SEQUENCE [LARGE SCALE MRNA] (ISOFORMS 1 AND 4)</scope>
</reference>
<reference key="9">
    <citation type="journal article" date="2004" name="Protein Sci.">
        <title>Signal peptide prediction based on analysis of experimentally verified cleavage sites.</title>
        <authorList>
            <person name="Zhang Z."/>
            <person name="Henzel W.J."/>
        </authorList>
    </citation>
    <scope>PROTEIN SEQUENCE OF N-TERMINUS</scope>
</reference>
<reference key="10">
    <citation type="journal article" date="2003" name="J. Immunol.">
        <title>Characterization of the CD200 receptor family in mice and humans and their interactions with CD200.</title>
        <authorList>
            <person name="Wright G.J."/>
            <person name="Cherwinski H."/>
            <person name="Foster-Cuevas M."/>
            <person name="Brooke G."/>
            <person name="Puklavec M.J."/>
            <person name="Bigler M."/>
            <person name="Song Y."/>
            <person name="Jenmalm M."/>
            <person name="Gorman D."/>
            <person name="McClanahan T."/>
            <person name="Liu M.-R."/>
            <person name="Brown M.H."/>
            <person name="Sedgwick J.D."/>
            <person name="Phillips J.H."/>
            <person name="Barclay A.N."/>
        </authorList>
    </citation>
    <scope>FUNCTION</scope>
    <scope>TISSUE SPECIFICITY</scope>
</reference>
<reference key="11">
    <citation type="journal article" date="2014" name="Adv. Immunol.">
        <title>The CD200-CD200R1 inhibitory signaling pathway: immune regulation and host-pathogen interactions.</title>
        <authorList>
            <person name="Vaine C.A."/>
            <person name="Soberman R.J."/>
        </authorList>
    </citation>
    <scope>REVIEW</scope>
</reference>
<reference key="12">
    <citation type="journal article" date="2014" name="J. Proteomics">
        <title>An enzyme assisted RP-RPLC approach for in-depth analysis of human liver phosphoproteome.</title>
        <authorList>
            <person name="Bian Y."/>
            <person name="Song C."/>
            <person name="Cheng K."/>
            <person name="Dong M."/>
            <person name="Wang F."/>
            <person name="Huang J."/>
            <person name="Sun D."/>
            <person name="Wang L."/>
            <person name="Ye M."/>
            <person name="Zou H."/>
        </authorList>
    </citation>
    <scope>IDENTIFICATION BY MASS SPECTROMETRY [LARGE SCALE ANALYSIS]</scope>
    <source>
        <tissue>Liver</tissue>
    </source>
</reference>
<name>MO2R1_HUMAN</name>
<accession>Q8TD46</accession>
<accession>B3KWZ9</accession>
<accession>E9PCM9</accession>
<accession>Q52LJ7</accession>
<accession>Q6IS95</accession>
<accession>Q6UW94</accession>
<accession>Q6WHB8</accession>
<accession>Q8TD44</accession>
<accession>Q8TD45</accession>
<accession>Q8TD52</accession>
<sequence length="348" mass="39041">MLCPWRTANLGLLLILTIFLVAEAEGAAQPNNSLMLQTSKENHALASSSLCMDEKQITQNYSKVLAEVNTSWPVKMATNAVLCCPPIALRNLIIITWEIILRGQPSCTKAYKKETNETKETNCTDERITWVSRPDQNSDLQIRTVAITHDGYYRCIMVTPDGNFHRGYHLQVLVTPEVTLFQNRNRTAVCKAVAGKPAAHISWIPEGDCATKQEYWSNGTVTVKSTCHWEVHNVSTVTCHVSHLTGNKSLYIELLPVPGAKKSAKLYIPYIILTIIILTIVGFIWLLKVNGCRKYKLNKTESTPVVEEDEMQPYASYTEKNNPLYDTTNKVKASEALQSEVDTDLHTL</sequence>
<evidence type="ECO:0000250" key="1"/>
<evidence type="ECO:0000255" key="2"/>
<evidence type="ECO:0000255" key="3">
    <source>
        <dbReference type="PROSITE-ProRule" id="PRU00114"/>
    </source>
</evidence>
<evidence type="ECO:0000269" key="4">
    <source>
    </source>
</evidence>
<evidence type="ECO:0000269" key="5">
    <source>
    </source>
</evidence>
<evidence type="ECO:0000269" key="6">
    <source>
    </source>
</evidence>
<evidence type="ECO:0000269" key="7">
    <source ref="2"/>
</evidence>
<evidence type="ECO:0000303" key="8">
    <source>
    </source>
</evidence>
<evidence type="ECO:0000303" key="9">
    <source>
    </source>
</evidence>
<evidence type="ECO:0000303" key="10">
    <source ref="2"/>
</evidence>
<evidence type="ECO:0000303" key="11">
    <source ref="3"/>
</evidence>
<evidence type="ECO:0000305" key="12"/>
<proteinExistence type="evidence at protein level"/>